<keyword id="KW-0007">Acetylation</keyword>
<keyword id="KW-0025">Alternative splicing</keyword>
<keyword id="KW-0903">Direct protein sequencing</keyword>
<keyword id="KW-0433">Leucine-rich repeat</keyword>
<keyword id="KW-1185">Reference proteome</keyword>
<keyword id="KW-0677">Repeat</keyword>
<keyword id="KW-0833">Ubl conjugation pathway</keyword>
<organism>
    <name type="scientific">Mus musculus</name>
    <name type="common">Mouse</name>
    <dbReference type="NCBI Taxonomy" id="10090"/>
    <lineage>
        <taxon>Eukaryota</taxon>
        <taxon>Metazoa</taxon>
        <taxon>Chordata</taxon>
        <taxon>Craniata</taxon>
        <taxon>Vertebrata</taxon>
        <taxon>Euteleostomi</taxon>
        <taxon>Mammalia</taxon>
        <taxon>Eutheria</taxon>
        <taxon>Euarchontoglires</taxon>
        <taxon>Glires</taxon>
        <taxon>Rodentia</taxon>
        <taxon>Myomorpha</taxon>
        <taxon>Muroidea</taxon>
        <taxon>Muridae</taxon>
        <taxon>Murinae</taxon>
        <taxon>Mus</taxon>
        <taxon>Mus</taxon>
    </lineage>
</organism>
<accession>Q80ZJ6</accession>
<accession>A2BEA2</accession>
<accession>Q6PGH5</accession>
<accession>Q8BG38</accession>
<sequence length="779" mass="89076">MASDTPESLMALCTDFCLRNLDGTLGYLLDKETLRLHPDIFLPSEICDQLVNEYVELVSAACTFEPHETFFSLFSDPRSTRLTRIHLREDLVQDQDLEAIRKQDLVELYLTNCEKLSAKSLQTLRSFRHSLVSLSLSGCANIFYEEDNPGGCEDECLVNPTCQVLVKDFTFEGFSRLRFLNLGRMIDGIPVESLLRPLNSLAALDLSGIQTSDATFLTQWKDSLMSLVLYNMDLSDDHIRVIVQLHKLRSKILTCGPHLISSHLDISRDRLSSYYKFKLTRKVLSLLVQKLGNLMSLDISGHMILENCSISKTDEEAGQTSTEPSKSSIMPFRALKRPLQFLGLFETSLCRLTHIPAYKVSGDKNEEQVLNAIEAYTEHRPEITSRAINLLFDIARIERCNQLLRALKLVITALKCHKYDKNIQVTGSAALFYLTNSEYRSEQSVKLRRQVIQVVLNGMESYQEVTVQRNCCLTLCNFSIPEELEFQYRRVNELLLGILSPTRQDESIQRIAVHLCNALVCQVDNDHKEAVGKMGFVVTMLKLIQKKLLDKTCDQVMEFSWSALWNITDETPDNCEMFLNFNGMKLFLDCLKEFPEKQELHRNMLGLLGNVAEVKELRPQLMTSQFISVFSNLLESKADGIEVSYNACGVLSHIMFDGPEAWGVCEPQRAEVEDRMWAAIQSWDINSRRNINYRSFEPILRLLPQGISPVSQHWATWALYNLVSVYPDKYCPLLIKEGGMPLLRDLIKMATARQETKEMARKVIEHCSNFREENMDTSR</sequence>
<name>ZER1_MOUSE</name>
<evidence type="ECO:0000250" key="1">
    <source>
        <dbReference type="UniProtKB" id="Q7Z7L7"/>
    </source>
</evidence>
<evidence type="ECO:0000303" key="2">
    <source>
    </source>
</evidence>
<evidence type="ECO:0000303" key="3">
    <source>
    </source>
</evidence>
<evidence type="ECO:0000305" key="4"/>
<evidence type="ECO:0000312" key="5">
    <source>
        <dbReference type="MGI" id="MGI:2442511"/>
    </source>
</evidence>
<protein>
    <recommendedName>
        <fullName evidence="4">Protein zer-1 homolog</fullName>
    </recommendedName>
    <alternativeName>
        <fullName>Zyg-11 homolog B-like protein</fullName>
    </alternativeName>
</protein>
<proteinExistence type="evidence at protein level"/>
<dbReference type="EMBL" id="AK029290">
    <property type="protein sequence ID" value="BAC26374.1"/>
    <property type="molecule type" value="mRNA"/>
</dbReference>
<dbReference type="EMBL" id="AK032318">
    <property type="protein sequence ID" value="BAC27811.1"/>
    <property type="molecule type" value="mRNA"/>
</dbReference>
<dbReference type="EMBL" id="AK048853">
    <property type="protein sequence ID" value="BAC33474.1"/>
    <property type="molecule type" value="mRNA"/>
</dbReference>
<dbReference type="EMBL" id="AK087046">
    <property type="protein sequence ID" value="BAC39788.1"/>
    <property type="molecule type" value="mRNA"/>
</dbReference>
<dbReference type="EMBL" id="BX005298">
    <property type="status" value="NOT_ANNOTATED_CDS"/>
    <property type="molecule type" value="Genomic_DNA"/>
</dbReference>
<dbReference type="EMBL" id="BC048924">
    <property type="protein sequence ID" value="AAH48924.1"/>
    <property type="molecule type" value="mRNA"/>
</dbReference>
<dbReference type="EMBL" id="BC057021">
    <property type="protein sequence ID" value="AAH57021.1"/>
    <property type="molecule type" value="mRNA"/>
</dbReference>
<dbReference type="CCDS" id="CCDS15870.1">
    <molecule id="Q80ZJ6-1"/>
</dbReference>
<dbReference type="CCDS" id="CCDS71017.1">
    <molecule id="Q80ZJ6-2"/>
</dbReference>
<dbReference type="RefSeq" id="NP_001277432.1">
    <molecule id="Q80ZJ6-2"/>
    <property type="nucleotide sequence ID" value="NM_001290503.1"/>
</dbReference>
<dbReference type="RefSeq" id="NP_848809.2">
    <molecule id="Q80ZJ6-1"/>
    <property type="nucleotide sequence ID" value="NM_178694.4"/>
</dbReference>
<dbReference type="RefSeq" id="XP_036016701.1">
    <molecule id="Q80ZJ6-2"/>
    <property type="nucleotide sequence ID" value="XM_036160808.1"/>
</dbReference>
<dbReference type="SMR" id="Q80ZJ6"/>
<dbReference type="BioGRID" id="230663">
    <property type="interactions" value="20"/>
</dbReference>
<dbReference type="FunCoup" id="Q80ZJ6">
    <property type="interactions" value="268"/>
</dbReference>
<dbReference type="STRING" id="10090.ENSMUSP00000046441"/>
<dbReference type="iPTMnet" id="Q80ZJ6"/>
<dbReference type="PhosphoSitePlus" id="Q80ZJ6"/>
<dbReference type="PaxDb" id="10090-ENSMUSP00000046441"/>
<dbReference type="ProteomicsDB" id="274978">
    <molecule id="Q80ZJ6-1"/>
</dbReference>
<dbReference type="ProteomicsDB" id="274979">
    <molecule id="Q80ZJ6-2"/>
</dbReference>
<dbReference type="ProteomicsDB" id="274980">
    <molecule id="Q80ZJ6-3"/>
</dbReference>
<dbReference type="Pumba" id="Q80ZJ6"/>
<dbReference type="Antibodypedia" id="31261">
    <property type="antibodies" value="68 antibodies from 21 providers"/>
</dbReference>
<dbReference type="DNASU" id="227693"/>
<dbReference type="Ensembl" id="ENSMUST00000044751.14">
    <molecule id="Q80ZJ6-1"/>
    <property type="protein sequence ID" value="ENSMUSP00000046441.9"/>
    <property type="gene ID" value="ENSMUSG00000039686.15"/>
</dbReference>
<dbReference type="Ensembl" id="ENSMUST00000113677.3">
    <molecule id="Q80ZJ6-2"/>
    <property type="protein sequence ID" value="ENSMUSP00000109307.2"/>
    <property type="gene ID" value="ENSMUSG00000039686.15"/>
</dbReference>
<dbReference type="GeneID" id="227693"/>
<dbReference type="KEGG" id="mmu:227693"/>
<dbReference type="UCSC" id="uc008jbf.2">
    <molecule id="Q80ZJ6-1"/>
    <property type="organism name" value="mouse"/>
</dbReference>
<dbReference type="UCSC" id="uc008jbh.2">
    <molecule id="Q80ZJ6-3"/>
    <property type="organism name" value="mouse"/>
</dbReference>
<dbReference type="AGR" id="MGI:2442511"/>
<dbReference type="CTD" id="10444"/>
<dbReference type="MGI" id="MGI:2442511">
    <property type="gene designation" value="Zer1"/>
</dbReference>
<dbReference type="VEuPathDB" id="HostDB:ENSMUSG00000039686"/>
<dbReference type="eggNOG" id="KOG3665">
    <property type="taxonomic scope" value="Eukaryota"/>
</dbReference>
<dbReference type="GeneTree" id="ENSGT00530000063187"/>
<dbReference type="HOGENOM" id="CLU_011533_0_0_1"/>
<dbReference type="InParanoid" id="Q80ZJ6"/>
<dbReference type="OMA" id="QIRRKHA"/>
<dbReference type="OrthoDB" id="5783533at2759"/>
<dbReference type="PhylomeDB" id="Q80ZJ6"/>
<dbReference type="TreeFam" id="TF313007"/>
<dbReference type="BioGRID-ORCS" id="227693">
    <property type="hits" value="5 hits in 79 CRISPR screens"/>
</dbReference>
<dbReference type="ChiTaRS" id="Zer1">
    <property type="organism name" value="mouse"/>
</dbReference>
<dbReference type="PRO" id="PR:Q80ZJ6"/>
<dbReference type="Proteomes" id="UP000000589">
    <property type="component" value="Chromosome 2"/>
</dbReference>
<dbReference type="RNAct" id="Q80ZJ6">
    <property type="molecule type" value="protein"/>
</dbReference>
<dbReference type="Bgee" id="ENSMUSG00000039686">
    <property type="expression patterns" value="Expressed in primary visual cortex and 147 other cell types or tissues"/>
</dbReference>
<dbReference type="ExpressionAtlas" id="Q80ZJ6">
    <property type="expression patterns" value="baseline and differential"/>
</dbReference>
<dbReference type="GO" id="GO:0031462">
    <property type="term" value="C:Cul2-RING ubiquitin ligase complex"/>
    <property type="evidence" value="ECO:0000250"/>
    <property type="project" value="UniProtKB"/>
</dbReference>
<dbReference type="GO" id="GO:0032436">
    <property type="term" value="P:positive regulation of proteasomal ubiquitin-dependent protein catabolic process"/>
    <property type="evidence" value="ECO:0000250"/>
    <property type="project" value="UniProtKB"/>
</dbReference>
<dbReference type="GO" id="GO:0006515">
    <property type="term" value="P:protein quality control for misfolded or incompletely synthesized proteins"/>
    <property type="evidence" value="ECO:0000250"/>
    <property type="project" value="UniProtKB"/>
</dbReference>
<dbReference type="FunFam" id="1.25.10.10:FF:000111">
    <property type="entry name" value="Protein zer-1 homolog"/>
    <property type="match status" value="1"/>
</dbReference>
<dbReference type="FunFam" id="3.80.10.10:FF:000085">
    <property type="entry name" value="protein zer-1 homolog isoform X1"/>
    <property type="match status" value="1"/>
</dbReference>
<dbReference type="Gene3D" id="1.25.10.10">
    <property type="entry name" value="Leucine-rich Repeat Variant"/>
    <property type="match status" value="1"/>
</dbReference>
<dbReference type="Gene3D" id="3.80.10.10">
    <property type="entry name" value="Ribonuclease Inhibitor"/>
    <property type="match status" value="1"/>
</dbReference>
<dbReference type="InterPro" id="IPR011989">
    <property type="entry name" value="ARM-like"/>
</dbReference>
<dbReference type="InterPro" id="IPR016024">
    <property type="entry name" value="ARM-type_fold"/>
</dbReference>
<dbReference type="InterPro" id="IPR000225">
    <property type="entry name" value="Armadillo"/>
</dbReference>
<dbReference type="InterPro" id="IPR032675">
    <property type="entry name" value="LRR_dom_sf"/>
</dbReference>
<dbReference type="InterPro" id="IPR056845">
    <property type="entry name" value="LRR_Zer-1"/>
</dbReference>
<dbReference type="InterPro" id="IPR055142">
    <property type="entry name" value="ZER1-like_C"/>
</dbReference>
<dbReference type="InterPro" id="IPR051341">
    <property type="entry name" value="Zyg-11_UBL_adapter"/>
</dbReference>
<dbReference type="PANTHER" id="PTHR12904">
    <property type="match status" value="1"/>
</dbReference>
<dbReference type="PANTHER" id="PTHR12904:SF23">
    <property type="entry name" value="PROTEIN ZER-1 HOMOLOG"/>
    <property type="match status" value="1"/>
</dbReference>
<dbReference type="Pfam" id="PF25013">
    <property type="entry name" value="LRR_Zer-1"/>
    <property type="match status" value="1"/>
</dbReference>
<dbReference type="Pfam" id="PF22964">
    <property type="entry name" value="ZER1-like_2nd"/>
    <property type="match status" value="1"/>
</dbReference>
<dbReference type="SMART" id="SM00185">
    <property type="entry name" value="ARM"/>
    <property type="match status" value="5"/>
</dbReference>
<dbReference type="SUPFAM" id="SSF48371">
    <property type="entry name" value="ARM repeat"/>
    <property type="match status" value="1"/>
</dbReference>
<dbReference type="SUPFAM" id="SSF52047">
    <property type="entry name" value="RNI-like"/>
    <property type="match status" value="1"/>
</dbReference>
<comment type="function">
    <text evidence="1">Serves as substrate adapter subunit in the E3 ubiquitin ligase complex ZYG11B-CUL2-Elongin BC. Acts redudantly with ZYG11B to target substrates bearing N-terminal glycine degrons for proteasomal degradation. Involved in the clearance of proteolytic fragments generated by caspase cleavage during apoptosis since N-terminal glycine degrons are strongly enriched at caspase cleavage sites. Also important in the quality control of protein N-myristoylation in which N-terminal glycine degrons are conditionally exposed after a failure of N-myristoylation.</text>
</comment>
<comment type="subunit">
    <text evidence="1">Interacts with the ELOC-ELOB/Elongin BC complex. Part of an E3 ubiquitin ligase complex including ZER1, CUL2 and Elongin BC.</text>
</comment>
<comment type="alternative products">
    <event type="alternative splicing"/>
    <isoform>
        <id>Q80ZJ6-1</id>
        <name>1</name>
        <sequence type="displayed"/>
    </isoform>
    <isoform>
        <id>Q80ZJ6-2</id>
        <name>2</name>
        <sequence type="described" ref="VSP_014425"/>
    </isoform>
    <isoform>
        <id>Q80ZJ6-3</id>
        <name>3</name>
        <sequence type="described" ref="VSP_014425 VSP_014426 VSP_014427"/>
    </isoform>
</comment>
<comment type="similarity">
    <text evidence="4">Belongs to the zyg-11 family.</text>
</comment>
<reference key="1">
    <citation type="journal article" date="2005" name="Science">
        <title>The transcriptional landscape of the mammalian genome.</title>
        <authorList>
            <person name="Carninci P."/>
            <person name="Kasukawa T."/>
            <person name="Katayama S."/>
            <person name="Gough J."/>
            <person name="Frith M.C."/>
            <person name="Maeda N."/>
            <person name="Oyama R."/>
            <person name="Ravasi T."/>
            <person name="Lenhard B."/>
            <person name="Wells C."/>
            <person name="Kodzius R."/>
            <person name="Shimokawa K."/>
            <person name="Bajic V.B."/>
            <person name="Brenner S.E."/>
            <person name="Batalov S."/>
            <person name="Forrest A.R."/>
            <person name="Zavolan M."/>
            <person name="Davis M.J."/>
            <person name="Wilming L.G."/>
            <person name="Aidinis V."/>
            <person name="Allen J.E."/>
            <person name="Ambesi-Impiombato A."/>
            <person name="Apweiler R."/>
            <person name="Aturaliya R.N."/>
            <person name="Bailey T.L."/>
            <person name="Bansal M."/>
            <person name="Baxter L."/>
            <person name="Beisel K.W."/>
            <person name="Bersano T."/>
            <person name="Bono H."/>
            <person name="Chalk A.M."/>
            <person name="Chiu K.P."/>
            <person name="Choudhary V."/>
            <person name="Christoffels A."/>
            <person name="Clutterbuck D.R."/>
            <person name="Crowe M.L."/>
            <person name="Dalla E."/>
            <person name="Dalrymple B.P."/>
            <person name="de Bono B."/>
            <person name="Della Gatta G."/>
            <person name="di Bernardo D."/>
            <person name="Down T."/>
            <person name="Engstrom P."/>
            <person name="Fagiolini M."/>
            <person name="Faulkner G."/>
            <person name="Fletcher C.F."/>
            <person name="Fukushima T."/>
            <person name="Furuno M."/>
            <person name="Futaki S."/>
            <person name="Gariboldi M."/>
            <person name="Georgii-Hemming P."/>
            <person name="Gingeras T.R."/>
            <person name="Gojobori T."/>
            <person name="Green R.E."/>
            <person name="Gustincich S."/>
            <person name="Harbers M."/>
            <person name="Hayashi Y."/>
            <person name="Hensch T.K."/>
            <person name="Hirokawa N."/>
            <person name="Hill D."/>
            <person name="Huminiecki L."/>
            <person name="Iacono M."/>
            <person name="Ikeo K."/>
            <person name="Iwama A."/>
            <person name="Ishikawa T."/>
            <person name="Jakt M."/>
            <person name="Kanapin A."/>
            <person name="Katoh M."/>
            <person name="Kawasawa Y."/>
            <person name="Kelso J."/>
            <person name="Kitamura H."/>
            <person name="Kitano H."/>
            <person name="Kollias G."/>
            <person name="Krishnan S.P."/>
            <person name="Kruger A."/>
            <person name="Kummerfeld S.K."/>
            <person name="Kurochkin I.V."/>
            <person name="Lareau L.F."/>
            <person name="Lazarevic D."/>
            <person name="Lipovich L."/>
            <person name="Liu J."/>
            <person name="Liuni S."/>
            <person name="McWilliam S."/>
            <person name="Madan Babu M."/>
            <person name="Madera M."/>
            <person name="Marchionni L."/>
            <person name="Matsuda H."/>
            <person name="Matsuzawa S."/>
            <person name="Miki H."/>
            <person name="Mignone F."/>
            <person name="Miyake S."/>
            <person name="Morris K."/>
            <person name="Mottagui-Tabar S."/>
            <person name="Mulder N."/>
            <person name="Nakano N."/>
            <person name="Nakauchi H."/>
            <person name="Ng P."/>
            <person name="Nilsson R."/>
            <person name="Nishiguchi S."/>
            <person name="Nishikawa S."/>
            <person name="Nori F."/>
            <person name="Ohara O."/>
            <person name="Okazaki Y."/>
            <person name="Orlando V."/>
            <person name="Pang K.C."/>
            <person name="Pavan W.J."/>
            <person name="Pavesi G."/>
            <person name="Pesole G."/>
            <person name="Petrovsky N."/>
            <person name="Piazza S."/>
            <person name="Reed J."/>
            <person name="Reid J.F."/>
            <person name="Ring B.Z."/>
            <person name="Ringwald M."/>
            <person name="Rost B."/>
            <person name="Ruan Y."/>
            <person name="Salzberg S.L."/>
            <person name="Sandelin A."/>
            <person name="Schneider C."/>
            <person name="Schoenbach C."/>
            <person name="Sekiguchi K."/>
            <person name="Semple C.A."/>
            <person name="Seno S."/>
            <person name="Sessa L."/>
            <person name="Sheng Y."/>
            <person name="Shibata Y."/>
            <person name="Shimada H."/>
            <person name="Shimada K."/>
            <person name="Silva D."/>
            <person name="Sinclair B."/>
            <person name="Sperling S."/>
            <person name="Stupka E."/>
            <person name="Sugiura K."/>
            <person name="Sultana R."/>
            <person name="Takenaka Y."/>
            <person name="Taki K."/>
            <person name="Tammoja K."/>
            <person name="Tan S.L."/>
            <person name="Tang S."/>
            <person name="Taylor M.S."/>
            <person name="Tegner J."/>
            <person name="Teichmann S.A."/>
            <person name="Ueda H.R."/>
            <person name="van Nimwegen E."/>
            <person name="Verardo R."/>
            <person name="Wei C.L."/>
            <person name="Yagi K."/>
            <person name="Yamanishi H."/>
            <person name="Zabarovsky E."/>
            <person name="Zhu S."/>
            <person name="Zimmer A."/>
            <person name="Hide W."/>
            <person name="Bult C."/>
            <person name="Grimmond S.M."/>
            <person name="Teasdale R.D."/>
            <person name="Liu E.T."/>
            <person name="Brusic V."/>
            <person name="Quackenbush J."/>
            <person name="Wahlestedt C."/>
            <person name="Mattick J.S."/>
            <person name="Hume D.A."/>
            <person name="Kai C."/>
            <person name="Sasaki D."/>
            <person name="Tomaru Y."/>
            <person name="Fukuda S."/>
            <person name="Kanamori-Katayama M."/>
            <person name="Suzuki M."/>
            <person name="Aoki J."/>
            <person name="Arakawa T."/>
            <person name="Iida J."/>
            <person name="Imamura K."/>
            <person name="Itoh M."/>
            <person name="Kato T."/>
            <person name="Kawaji H."/>
            <person name="Kawagashira N."/>
            <person name="Kawashima T."/>
            <person name="Kojima M."/>
            <person name="Kondo S."/>
            <person name="Konno H."/>
            <person name="Nakano K."/>
            <person name="Ninomiya N."/>
            <person name="Nishio T."/>
            <person name="Okada M."/>
            <person name="Plessy C."/>
            <person name="Shibata K."/>
            <person name="Shiraki T."/>
            <person name="Suzuki S."/>
            <person name="Tagami M."/>
            <person name="Waki K."/>
            <person name="Watahiki A."/>
            <person name="Okamura-Oho Y."/>
            <person name="Suzuki H."/>
            <person name="Kawai J."/>
            <person name="Hayashizaki Y."/>
        </authorList>
    </citation>
    <scope>NUCLEOTIDE SEQUENCE [LARGE SCALE MRNA] (ISOFORM 3)</scope>
    <source>
        <strain>C57BL/6J</strain>
        <tissue>Cerebellum</tissue>
        <tissue>Head</tissue>
        <tissue>Lung</tissue>
        <tissue>Olfactory bulb</tissue>
    </source>
</reference>
<reference key="2">
    <citation type="journal article" date="2009" name="PLoS Biol.">
        <title>Lineage-specific biology revealed by a finished genome assembly of the mouse.</title>
        <authorList>
            <person name="Church D.M."/>
            <person name="Goodstadt L."/>
            <person name="Hillier L.W."/>
            <person name="Zody M.C."/>
            <person name="Goldstein S."/>
            <person name="She X."/>
            <person name="Bult C.J."/>
            <person name="Agarwala R."/>
            <person name="Cherry J.L."/>
            <person name="DiCuccio M."/>
            <person name="Hlavina W."/>
            <person name="Kapustin Y."/>
            <person name="Meric P."/>
            <person name="Maglott D."/>
            <person name="Birtle Z."/>
            <person name="Marques A.C."/>
            <person name="Graves T."/>
            <person name="Zhou S."/>
            <person name="Teague B."/>
            <person name="Potamousis K."/>
            <person name="Churas C."/>
            <person name="Place M."/>
            <person name="Herschleb J."/>
            <person name="Runnheim R."/>
            <person name="Forrest D."/>
            <person name="Amos-Landgraf J."/>
            <person name="Schwartz D.C."/>
            <person name="Cheng Z."/>
            <person name="Lindblad-Toh K."/>
            <person name="Eichler E.E."/>
            <person name="Ponting C.P."/>
        </authorList>
    </citation>
    <scope>NUCLEOTIDE SEQUENCE [LARGE SCALE GENOMIC DNA]</scope>
    <source>
        <strain>C57BL/6J</strain>
    </source>
</reference>
<reference key="3">
    <citation type="journal article" date="2004" name="Genome Res.">
        <title>The status, quality, and expansion of the NIH full-length cDNA project: the Mammalian Gene Collection (MGC).</title>
        <authorList>
            <consortium name="The MGC Project Team"/>
        </authorList>
    </citation>
    <scope>NUCLEOTIDE SEQUENCE [LARGE SCALE MRNA] (ISOFORMS 1 AND 2)</scope>
    <source>
        <strain>C57BL/6J</strain>
        <tissue>Embryonic brain</tissue>
        <tissue>Olfactory epithelium</tissue>
    </source>
</reference>
<reference key="4">
    <citation type="submission" date="2009-01" db="UniProtKB">
        <authorList>
            <person name="Lubec G."/>
            <person name="Sunyer B."/>
            <person name="Chen W.-Q."/>
        </authorList>
    </citation>
    <scope>PROTEIN SEQUENCE OF 504-510</scope>
    <scope>IDENTIFICATION BY MASS SPECTROMETRY</scope>
    <source>
        <strain>OF1</strain>
        <tissue>Hippocampus</tissue>
    </source>
</reference>
<reference key="5">
    <citation type="journal article" date="2010" name="Cell">
        <title>A tissue-specific atlas of mouse protein phosphorylation and expression.</title>
        <authorList>
            <person name="Huttlin E.L."/>
            <person name="Jedrychowski M.P."/>
            <person name="Elias J.E."/>
            <person name="Goswami T."/>
            <person name="Rad R."/>
            <person name="Beausoleil S.A."/>
            <person name="Villen J."/>
            <person name="Haas W."/>
            <person name="Sowa M.E."/>
            <person name="Gygi S.P."/>
        </authorList>
    </citation>
    <scope>IDENTIFICATION BY MASS SPECTROMETRY [LARGE SCALE ANALYSIS]</scope>
    <source>
        <tissue>Brain</tissue>
        <tissue>Spleen</tissue>
        <tissue>Testis</tissue>
    </source>
</reference>
<feature type="initiator methionine" description="Removed" evidence="1">
    <location>
        <position position="1"/>
    </location>
</feature>
<feature type="chain" id="PRO_0000066599" description="Protein zer-1 homolog">
    <location>
        <begin position="2"/>
        <end position="779"/>
    </location>
</feature>
<feature type="repeat" description="LRR 1">
    <location>
        <begin position="226"/>
        <end position="245"/>
    </location>
</feature>
<feature type="repeat" description="LRR 2">
    <location>
        <begin position="246"/>
        <end position="281"/>
    </location>
</feature>
<feature type="repeat" description="LRR 3">
    <location>
        <begin position="291"/>
        <end position="315"/>
    </location>
</feature>
<feature type="repeat" description="ARM 1">
    <location>
        <begin position="440"/>
        <end position="480"/>
    </location>
</feature>
<feature type="repeat" description="ARM 2">
    <location>
        <begin position="524"/>
        <end position="569"/>
    </location>
</feature>
<feature type="repeat" description="ARM 3">
    <location>
        <begin position="571"/>
        <end position="613"/>
    </location>
</feature>
<feature type="repeat" description="ARM 4">
    <location>
        <begin position="615"/>
        <end position="656"/>
    </location>
</feature>
<feature type="repeat" description="ARM 5">
    <location>
        <begin position="727"/>
        <end position="769"/>
    </location>
</feature>
<feature type="modified residue" description="N-acetylalanine" evidence="1">
    <location>
        <position position="2"/>
    </location>
</feature>
<feature type="splice variant" id="VSP_014425" description="In isoform 2 and isoform 3." evidence="2 3">
    <location>
        <begin position="250"/>
        <end position="262"/>
    </location>
</feature>
<feature type="splice variant" id="VSP_014426" description="In isoform 3." evidence="3">
    <original>QRNCCLTLCNFSIPEELEFQYRR</original>
    <variation>SPCLLRPACLGPVSLPAPQAPQA</variation>
    <location>
        <begin position="468"/>
        <end position="490"/>
    </location>
</feature>
<feature type="splice variant" id="VSP_014427" description="In isoform 3." evidence="3">
    <location>
        <begin position="491"/>
        <end position="779"/>
    </location>
</feature>
<gene>
    <name evidence="5" type="primary">Zer1</name>
    <name type="synonym">Zyg</name>
    <name type="synonym">Zyg11bl</name>
</gene>